<feature type="chain" id="PRO_0000094520" description="UPF0201 protein STK_09490">
    <location>
        <begin position="1"/>
        <end position="145"/>
    </location>
</feature>
<organism>
    <name type="scientific">Sulfurisphaera tokodaii (strain DSM 16993 / JCM 10545 / NBRC 100140 / 7)</name>
    <name type="common">Sulfolobus tokodaii</name>
    <dbReference type="NCBI Taxonomy" id="273063"/>
    <lineage>
        <taxon>Archaea</taxon>
        <taxon>Thermoproteota</taxon>
        <taxon>Thermoprotei</taxon>
        <taxon>Sulfolobales</taxon>
        <taxon>Sulfolobaceae</taxon>
        <taxon>Sulfurisphaera</taxon>
    </lineage>
</organism>
<evidence type="ECO:0000255" key="1">
    <source>
        <dbReference type="HAMAP-Rule" id="MF_01112"/>
    </source>
</evidence>
<dbReference type="EMBL" id="BA000023">
    <property type="protein sequence ID" value="BAB65963.1"/>
    <property type="molecule type" value="Genomic_DNA"/>
</dbReference>
<dbReference type="RefSeq" id="WP_010978945.1">
    <property type="nucleotide sequence ID" value="NC_003106.2"/>
</dbReference>
<dbReference type="SMR" id="Q973F0"/>
<dbReference type="STRING" id="273063.STK_09490"/>
<dbReference type="GeneID" id="1458914"/>
<dbReference type="KEGG" id="sto:STK_09490"/>
<dbReference type="PATRIC" id="fig|273063.9.peg.1061"/>
<dbReference type="eggNOG" id="arCOG01043">
    <property type="taxonomic scope" value="Archaea"/>
</dbReference>
<dbReference type="OrthoDB" id="7819at2157"/>
<dbReference type="Proteomes" id="UP000001015">
    <property type="component" value="Chromosome"/>
</dbReference>
<dbReference type="Gene3D" id="3.30.1440.10">
    <property type="match status" value="1"/>
</dbReference>
<dbReference type="HAMAP" id="MF_01112">
    <property type="entry name" value="UPF0201"/>
    <property type="match status" value="1"/>
</dbReference>
<dbReference type="InterPro" id="IPR002739">
    <property type="entry name" value="PAB1135-like"/>
</dbReference>
<dbReference type="InterPro" id="IPR022803">
    <property type="entry name" value="Ribosomal_uL5_dom_sf"/>
</dbReference>
<dbReference type="NCBIfam" id="NF001687">
    <property type="entry name" value="PRK00447.1"/>
    <property type="match status" value="1"/>
</dbReference>
<dbReference type="PANTHER" id="PTHR39652">
    <property type="entry name" value="UPF0201 PROTEIN TK1335"/>
    <property type="match status" value="1"/>
</dbReference>
<dbReference type="PANTHER" id="PTHR39652:SF1">
    <property type="entry name" value="UPF0201 PROTEIN TK1335"/>
    <property type="match status" value="1"/>
</dbReference>
<dbReference type="Pfam" id="PF01877">
    <property type="entry name" value="RNA_binding"/>
    <property type="match status" value="1"/>
</dbReference>
<dbReference type="SUPFAM" id="SSF55282">
    <property type="entry name" value="RL5-like"/>
    <property type="match status" value="1"/>
</dbReference>
<name>Y949_SULTO</name>
<proteinExistence type="inferred from homology"/>
<comment type="similarity">
    <text evidence="1">Belongs to the UPF0201 family.</text>
</comment>
<reference key="1">
    <citation type="journal article" date="2001" name="DNA Res.">
        <title>Complete genome sequence of an aerobic thermoacidophilic Crenarchaeon, Sulfolobus tokodaii strain7.</title>
        <authorList>
            <person name="Kawarabayasi Y."/>
            <person name="Hino Y."/>
            <person name="Horikawa H."/>
            <person name="Jin-no K."/>
            <person name="Takahashi M."/>
            <person name="Sekine M."/>
            <person name="Baba S."/>
            <person name="Ankai A."/>
            <person name="Kosugi H."/>
            <person name="Hosoyama A."/>
            <person name="Fukui S."/>
            <person name="Nagai Y."/>
            <person name="Nishijima K."/>
            <person name="Otsuka R."/>
            <person name="Nakazawa H."/>
            <person name="Takamiya M."/>
            <person name="Kato Y."/>
            <person name="Yoshizawa T."/>
            <person name="Tanaka T."/>
            <person name="Kudoh Y."/>
            <person name="Yamazaki J."/>
            <person name="Kushida N."/>
            <person name="Oguchi A."/>
            <person name="Aoki K."/>
            <person name="Masuda S."/>
            <person name="Yanagii M."/>
            <person name="Nishimura M."/>
            <person name="Yamagishi A."/>
            <person name="Oshima T."/>
            <person name="Kikuchi H."/>
        </authorList>
    </citation>
    <scope>NUCLEOTIDE SEQUENCE [LARGE SCALE GENOMIC DNA]</scope>
    <source>
        <strain>DSM 16993 / JCM 10545 / NBRC 100140 / 7</strain>
    </source>
</reference>
<keyword id="KW-1185">Reference proteome</keyword>
<gene>
    <name type="ordered locus">STK_09490</name>
</gene>
<accession>Q973F0</accession>
<protein>
    <recommendedName>
        <fullName evidence="1">UPF0201 protein STK_09490</fullName>
    </recommendedName>
</protein>
<sequence>MTKIIIEVEVRPSEDENKVLQAIRNLFDFENLKEEKSGYTKILVAESHTLLSLQKFHRKLREERILDAARKYLTKNLIGNVITFMLNKQAAAVGKISFVDDEKESPLGPIKVTIEYKDPQALIDWLTPKTAKGVPLWENPIPSDE</sequence>